<sequence>MGEDGKLYIIREEILSDSLKKTLKVKELLESGKVKTINEAVKQVGISRSAFYKYRDYVFPFSKFSKGKIITLSMVLDHMPGVLSSILDVVANARGNVVTINQSMPSMGVASVTISIDTQYMEMSLENFLEKLSSQNGVRKIEILGE</sequence>
<evidence type="ECO:0000255" key="1">
    <source>
        <dbReference type="HAMAP-Rule" id="MF_00707"/>
    </source>
</evidence>
<dbReference type="EMBL" id="CP000923">
    <property type="protein sequence ID" value="ABY93575.1"/>
    <property type="molecule type" value="Genomic_DNA"/>
</dbReference>
<dbReference type="RefSeq" id="WP_003867580.1">
    <property type="nucleotide sequence ID" value="NC_010320.1"/>
</dbReference>
<dbReference type="SMR" id="B0K544"/>
<dbReference type="KEGG" id="tex:Teth514_2312"/>
<dbReference type="HOGENOM" id="CLU_128147_0_0_9"/>
<dbReference type="Proteomes" id="UP000002155">
    <property type="component" value="Chromosome"/>
</dbReference>
<dbReference type="CDD" id="cd04888">
    <property type="entry name" value="ACT_PheB-BS"/>
    <property type="match status" value="1"/>
</dbReference>
<dbReference type="Gene3D" id="3.30.70.260">
    <property type="match status" value="1"/>
</dbReference>
<dbReference type="HAMAP" id="MF_00707">
    <property type="entry name" value="UPF0735"/>
    <property type="match status" value="1"/>
</dbReference>
<dbReference type="InterPro" id="IPR045865">
    <property type="entry name" value="ACT-like_dom_sf"/>
</dbReference>
<dbReference type="InterPro" id="IPR002912">
    <property type="entry name" value="ACT_dom"/>
</dbReference>
<dbReference type="InterPro" id="IPR008310">
    <property type="entry name" value="UPF0735_ACT_dom-cont"/>
</dbReference>
<dbReference type="NCBIfam" id="NF003361">
    <property type="entry name" value="PRK04435.1"/>
    <property type="match status" value="1"/>
</dbReference>
<dbReference type="PIRSF" id="PIRSF025624">
    <property type="entry name" value="ACT_PheB"/>
    <property type="match status" value="1"/>
</dbReference>
<dbReference type="SUPFAM" id="SSF55021">
    <property type="entry name" value="ACT-like"/>
    <property type="match status" value="1"/>
</dbReference>
<dbReference type="PROSITE" id="PS51671">
    <property type="entry name" value="ACT"/>
    <property type="match status" value="1"/>
</dbReference>
<gene>
    <name type="ordered locus">Teth514_2312</name>
</gene>
<comment type="similarity">
    <text evidence="1">Belongs to the UPF0735 family.</text>
</comment>
<feature type="chain" id="PRO_0000366326" description="UPF0735 ACT domain-containing protein Teth514_2312">
    <location>
        <begin position="1"/>
        <end position="146"/>
    </location>
</feature>
<feature type="domain" description="ACT" evidence="1">
    <location>
        <begin position="71"/>
        <end position="146"/>
    </location>
</feature>
<reference key="1">
    <citation type="submission" date="2008-01" db="EMBL/GenBank/DDBJ databases">
        <title>Complete sequence of Thermoanaerobacter sp. X514.</title>
        <authorList>
            <consortium name="US DOE Joint Genome Institute"/>
            <person name="Copeland A."/>
            <person name="Lucas S."/>
            <person name="Lapidus A."/>
            <person name="Barry K."/>
            <person name="Glavina del Rio T."/>
            <person name="Dalin E."/>
            <person name="Tice H."/>
            <person name="Pitluck S."/>
            <person name="Bruce D."/>
            <person name="Goodwin L."/>
            <person name="Saunders E."/>
            <person name="Brettin T."/>
            <person name="Detter J.C."/>
            <person name="Han C."/>
            <person name="Schmutz J."/>
            <person name="Larimer F."/>
            <person name="Land M."/>
            <person name="Hauser L."/>
            <person name="Kyrpides N."/>
            <person name="Kim E."/>
            <person name="Hemme C."/>
            <person name="Fields M.W."/>
            <person name="He Z."/>
            <person name="Zhou J."/>
            <person name="Richardson P."/>
        </authorList>
    </citation>
    <scope>NUCLEOTIDE SEQUENCE [LARGE SCALE GENOMIC DNA]</scope>
    <source>
        <strain>X514</strain>
    </source>
</reference>
<protein>
    <recommendedName>
        <fullName evidence="1">UPF0735 ACT domain-containing protein Teth514_2312</fullName>
    </recommendedName>
</protein>
<proteinExistence type="inferred from homology"/>
<organism>
    <name type="scientific">Thermoanaerobacter sp. (strain X514)</name>
    <dbReference type="NCBI Taxonomy" id="399726"/>
    <lineage>
        <taxon>Bacteria</taxon>
        <taxon>Bacillati</taxon>
        <taxon>Bacillota</taxon>
        <taxon>Clostridia</taxon>
        <taxon>Thermoanaerobacterales</taxon>
        <taxon>Thermoanaerobacteraceae</taxon>
        <taxon>Thermoanaerobacter</taxon>
    </lineage>
</organism>
<accession>B0K544</accession>
<name>Y2312_THEPX</name>